<accession>Q6F1B1</accession>
<protein>
    <recommendedName>
        <fullName evidence="1">Valine--tRNA ligase</fullName>
        <ecNumber evidence="1">6.1.1.9</ecNumber>
    </recommendedName>
    <alternativeName>
        <fullName evidence="1">Valyl-tRNA synthetase</fullName>
        <shortName evidence="1">ValRS</shortName>
    </alternativeName>
</protein>
<evidence type="ECO:0000255" key="1">
    <source>
        <dbReference type="HAMAP-Rule" id="MF_02004"/>
    </source>
</evidence>
<keyword id="KW-0030">Aminoacyl-tRNA synthetase</keyword>
<keyword id="KW-0067">ATP-binding</keyword>
<keyword id="KW-0175">Coiled coil</keyword>
<keyword id="KW-0963">Cytoplasm</keyword>
<keyword id="KW-0436">Ligase</keyword>
<keyword id="KW-0547">Nucleotide-binding</keyword>
<keyword id="KW-0648">Protein biosynthesis</keyword>
<keyword id="KW-1185">Reference proteome</keyword>
<dbReference type="EC" id="6.1.1.9" evidence="1"/>
<dbReference type="EMBL" id="AE017263">
    <property type="protein sequence ID" value="AAT75712.1"/>
    <property type="molecule type" value="Genomic_DNA"/>
</dbReference>
<dbReference type="RefSeq" id="WP_011183252.1">
    <property type="nucleotide sequence ID" value="NC_006055.1"/>
</dbReference>
<dbReference type="RefSeq" id="YP_053596.1">
    <property type="nucleotide sequence ID" value="NC_006055.1"/>
</dbReference>
<dbReference type="SMR" id="Q6F1B1"/>
<dbReference type="STRING" id="265311.Mfl355"/>
<dbReference type="PaxDb" id="265311-Mfl355"/>
<dbReference type="EnsemblBacteria" id="AAT75712">
    <property type="protein sequence ID" value="AAT75712"/>
    <property type="gene ID" value="Mfl355"/>
</dbReference>
<dbReference type="GeneID" id="2898008"/>
<dbReference type="KEGG" id="mfl:Mfl355"/>
<dbReference type="PATRIC" id="fig|265311.5.peg.353"/>
<dbReference type="eggNOG" id="COG0525">
    <property type="taxonomic scope" value="Bacteria"/>
</dbReference>
<dbReference type="HOGENOM" id="CLU_001493_0_2_14"/>
<dbReference type="OrthoDB" id="9810365at2"/>
<dbReference type="Proteomes" id="UP000006647">
    <property type="component" value="Chromosome"/>
</dbReference>
<dbReference type="GO" id="GO:0005829">
    <property type="term" value="C:cytosol"/>
    <property type="evidence" value="ECO:0007669"/>
    <property type="project" value="TreeGrafter"/>
</dbReference>
<dbReference type="GO" id="GO:0002161">
    <property type="term" value="F:aminoacyl-tRNA deacylase activity"/>
    <property type="evidence" value="ECO:0007669"/>
    <property type="project" value="InterPro"/>
</dbReference>
<dbReference type="GO" id="GO:0005524">
    <property type="term" value="F:ATP binding"/>
    <property type="evidence" value="ECO:0007669"/>
    <property type="project" value="UniProtKB-UniRule"/>
</dbReference>
<dbReference type="GO" id="GO:0004832">
    <property type="term" value="F:valine-tRNA ligase activity"/>
    <property type="evidence" value="ECO:0007669"/>
    <property type="project" value="UniProtKB-UniRule"/>
</dbReference>
<dbReference type="GO" id="GO:0006438">
    <property type="term" value="P:valyl-tRNA aminoacylation"/>
    <property type="evidence" value="ECO:0007669"/>
    <property type="project" value="UniProtKB-UniRule"/>
</dbReference>
<dbReference type="CDD" id="cd07962">
    <property type="entry name" value="Anticodon_Ia_Val"/>
    <property type="match status" value="1"/>
</dbReference>
<dbReference type="CDD" id="cd00817">
    <property type="entry name" value="ValRS_core"/>
    <property type="match status" value="1"/>
</dbReference>
<dbReference type="FunFam" id="3.40.50.620:FF:000032">
    <property type="entry name" value="Valine--tRNA ligase"/>
    <property type="match status" value="1"/>
</dbReference>
<dbReference type="FunFam" id="3.40.50.620:FF:000098">
    <property type="entry name" value="Valine--tRNA ligase"/>
    <property type="match status" value="1"/>
</dbReference>
<dbReference type="Gene3D" id="3.40.50.620">
    <property type="entry name" value="HUPs"/>
    <property type="match status" value="2"/>
</dbReference>
<dbReference type="Gene3D" id="1.10.730.10">
    <property type="entry name" value="Isoleucyl-tRNA Synthetase, Domain 1"/>
    <property type="match status" value="1"/>
</dbReference>
<dbReference type="Gene3D" id="1.10.287.380">
    <property type="entry name" value="Valyl-tRNA synthetase, C-terminal domain"/>
    <property type="match status" value="1"/>
</dbReference>
<dbReference type="HAMAP" id="MF_02004">
    <property type="entry name" value="Val_tRNA_synth_type1"/>
    <property type="match status" value="1"/>
</dbReference>
<dbReference type="InterPro" id="IPR001412">
    <property type="entry name" value="aa-tRNA-synth_I_CS"/>
</dbReference>
<dbReference type="InterPro" id="IPR002300">
    <property type="entry name" value="aa-tRNA-synth_Ia"/>
</dbReference>
<dbReference type="InterPro" id="IPR033705">
    <property type="entry name" value="Anticodon_Ia_Val"/>
</dbReference>
<dbReference type="InterPro" id="IPR013155">
    <property type="entry name" value="M/V/L/I-tRNA-synth_anticd-bd"/>
</dbReference>
<dbReference type="InterPro" id="IPR014729">
    <property type="entry name" value="Rossmann-like_a/b/a_fold"/>
</dbReference>
<dbReference type="InterPro" id="IPR010978">
    <property type="entry name" value="tRNA-bd_arm"/>
</dbReference>
<dbReference type="InterPro" id="IPR009080">
    <property type="entry name" value="tRNAsynth_Ia_anticodon-bd"/>
</dbReference>
<dbReference type="InterPro" id="IPR037118">
    <property type="entry name" value="Val-tRNA_synth_C_sf"/>
</dbReference>
<dbReference type="InterPro" id="IPR019499">
    <property type="entry name" value="Val-tRNA_synth_tRNA-bd"/>
</dbReference>
<dbReference type="InterPro" id="IPR009008">
    <property type="entry name" value="Val/Leu/Ile-tRNA-synth_edit"/>
</dbReference>
<dbReference type="InterPro" id="IPR002303">
    <property type="entry name" value="Valyl-tRNA_ligase"/>
</dbReference>
<dbReference type="NCBIfam" id="NF004349">
    <property type="entry name" value="PRK05729.1"/>
    <property type="match status" value="1"/>
</dbReference>
<dbReference type="NCBIfam" id="TIGR00422">
    <property type="entry name" value="valS"/>
    <property type="match status" value="1"/>
</dbReference>
<dbReference type="PANTHER" id="PTHR11946:SF93">
    <property type="entry name" value="VALINE--TRNA LIGASE, CHLOROPLASTIC_MITOCHONDRIAL 2"/>
    <property type="match status" value="1"/>
</dbReference>
<dbReference type="PANTHER" id="PTHR11946">
    <property type="entry name" value="VALYL-TRNA SYNTHETASES"/>
    <property type="match status" value="1"/>
</dbReference>
<dbReference type="Pfam" id="PF08264">
    <property type="entry name" value="Anticodon_1"/>
    <property type="match status" value="1"/>
</dbReference>
<dbReference type="Pfam" id="PF00133">
    <property type="entry name" value="tRNA-synt_1"/>
    <property type="match status" value="1"/>
</dbReference>
<dbReference type="Pfam" id="PF10458">
    <property type="entry name" value="Val_tRNA-synt_C"/>
    <property type="match status" value="1"/>
</dbReference>
<dbReference type="PRINTS" id="PR00986">
    <property type="entry name" value="TRNASYNTHVAL"/>
</dbReference>
<dbReference type="SUPFAM" id="SSF47323">
    <property type="entry name" value="Anticodon-binding domain of a subclass of class I aminoacyl-tRNA synthetases"/>
    <property type="match status" value="1"/>
</dbReference>
<dbReference type="SUPFAM" id="SSF52374">
    <property type="entry name" value="Nucleotidylyl transferase"/>
    <property type="match status" value="1"/>
</dbReference>
<dbReference type="SUPFAM" id="SSF46589">
    <property type="entry name" value="tRNA-binding arm"/>
    <property type="match status" value="1"/>
</dbReference>
<dbReference type="SUPFAM" id="SSF50677">
    <property type="entry name" value="ValRS/IleRS/LeuRS editing domain"/>
    <property type="match status" value="1"/>
</dbReference>
<dbReference type="PROSITE" id="PS00178">
    <property type="entry name" value="AA_TRNA_LIGASE_I"/>
    <property type="match status" value="1"/>
</dbReference>
<sequence>MKKELEAKYSYEIVEENRYEWWIQNEYFKANPDSKKPKFSIVLPPPNVTGKLHIGHAWDGSLQDAIIRFKKLNGFDVLYLPGMDHAGISTQVKVEAKLREQGISRFELGREKFLEQAWKWKHEYAAIIRQQWSKLGLAFDYSMEKFTLDDDINKIVTEIFVDFYNKGLIYKGKRIVNWDPMQKTAISNVEVIYKEVEGFMYHFKYMIQGTNEFLNVATTRPETMFADQCLVVNPKDERYTSFIGKKAINPVNNQAIPIIADDYVELDFGTGVMKCTPAHDLNDFEIAVRHNLEKPICMNEDGTINEMGGEEYQGLDRFEARNKIIENLTKEKTFIKAEPMIHQVGFSERSNAIVEPYLSDQWFVKMDSFADMILKLQESNDKIKFFPERFDQVLKKWMENIHDWTISRQLWWGHRIPAWYNKEDKTKIYVGMEAPKDAENWIQDEDVLDTWFSSGLWPFATLMRGEGFESKYFKEYLPNGVLVTGHDIIFSWVSRMIFQTIEYTGQIPFKDVLIHGLVRDEHGAKMSKSLGNGIDPMDVIVNNGSDSLRFSLLTNSTPGQDIRYSDSKVKAAWNFINKLWNASRYVLMNLEEDFKPWEEQAILNSNSLNETDKWVLTEFSKVSKQVNYLIDKYEFAIAGKMLYDFVWNTYCSWYIEFAKVNLNNPKTKEATQQTIVYLLKNILIMLHPYLPFVTEHIYKTLDMKNSILEESWFDKEFVFETDYINVVIELINSIREFRATNNIKNNVLLNWNATNGNLEIITKYNLEINNFLNEFVNANLSINESLVSETTSLSVLDFFIEIPNDDFIDKEKMLEELATKKKELENEISRSERMLSNENFISKAAPSKIEEEKEKYELYKQQLELIQDKLNKM</sequence>
<feature type="chain" id="PRO_0000224503" description="Valine--tRNA ligase">
    <location>
        <begin position="1"/>
        <end position="873"/>
    </location>
</feature>
<feature type="coiled-coil region" evidence="1">
    <location>
        <begin position="804"/>
        <end position="873"/>
    </location>
</feature>
<feature type="short sequence motif" description="'HIGH' region">
    <location>
        <begin position="46"/>
        <end position="56"/>
    </location>
</feature>
<feature type="short sequence motif" description="'KMSKS' region">
    <location>
        <begin position="525"/>
        <end position="529"/>
    </location>
</feature>
<feature type="binding site" evidence="1">
    <location>
        <position position="528"/>
    </location>
    <ligand>
        <name>ATP</name>
        <dbReference type="ChEBI" id="CHEBI:30616"/>
    </ligand>
</feature>
<gene>
    <name evidence="1" type="primary">valS</name>
    <name type="ordered locus">Mfl355</name>
</gene>
<organism>
    <name type="scientific">Mesoplasma florum (strain ATCC 33453 / NBRC 100688 / NCTC 11704 / L1)</name>
    <name type="common">Acholeplasma florum</name>
    <dbReference type="NCBI Taxonomy" id="265311"/>
    <lineage>
        <taxon>Bacteria</taxon>
        <taxon>Bacillati</taxon>
        <taxon>Mycoplasmatota</taxon>
        <taxon>Mollicutes</taxon>
        <taxon>Entomoplasmatales</taxon>
        <taxon>Entomoplasmataceae</taxon>
        <taxon>Mesoplasma</taxon>
    </lineage>
</organism>
<name>SYV_MESFL</name>
<reference key="1">
    <citation type="submission" date="2004-06" db="EMBL/GenBank/DDBJ databases">
        <authorList>
            <person name="Birren B.W."/>
            <person name="Stange-Thomann N."/>
            <person name="Hafez N."/>
            <person name="DeCaprio D."/>
            <person name="Fisher S."/>
            <person name="Butler J."/>
            <person name="Elkins T."/>
            <person name="Kodira C.D."/>
            <person name="Major J."/>
            <person name="Wang S."/>
            <person name="Nicol R."/>
            <person name="Nusbaum C."/>
        </authorList>
    </citation>
    <scope>NUCLEOTIDE SEQUENCE [LARGE SCALE GENOMIC DNA]</scope>
    <source>
        <strain>ATCC 33453 / NBRC 100688 / NCTC 11704 / L1</strain>
    </source>
</reference>
<proteinExistence type="inferred from homology"/>
<comment type="function">
    <text evidence="1">Catalyzes the attachment of valine to tRNA(Val). As ValRS can inadvertently accommodate and process structurally similar amino acids such as threonine, to avoid such errors, it has a 'posttransfer' editing activity that hydrolyzes mischarged Thr-tRNA(Val) in a tRNA-dependent manner.</text>
</comment>
<comment type="catalytic activity">
    <reaction evidence="1">
        <text>tRNA(Val) + L-valine + ATP = L-valyl-tRNA(Val) + AMP + diphosphate</text>
        <dbReference type="Rhea" id="RHEA:10704"/>
        <dbReference type="Rhea" id="RHEA-COMP:9672"/>
        <dbReference type="Rhea" id="RHEA-COMP:9708"/>
        <dbReference type="ChEBI" id="CHEBI:30616"/>
        <dbReference type="ChEBI" id="CHEBI:33019"/>
        <dbReference type="ChEBI" id="CHEBI:57762"/>
        <dbReference type="ChEBI" id="CHEBI:78442"/>
        <dbReference type="ChEBI" id="CHEBI:78537"/>
        <dbReference type="ChEBI" id="CHEBI:456215"/>
        <dbReference type="EC" id="6.1.1.9"/>
    </reaction>
</comment>
<comment type="subunit">
    <text evidence="1">Monomer.</text>
</comment>
<comment type="subcellular location">
    <subcellularLocation>
        <location evidence="1">Cytoplasm</location>
    </subcellularLocation>
</comment>
<comment type="domain">
    <text evidence="1">ValRS has two distinct active sites: one for aminoacylation and one for editing. The misactivated threonine is translocated from the active site to the editing site.</text>
</comment>
<comment type="domain">
    <text evidence="1">The C-terminal coiled-coil domain is crucial for aminoacylation activity.</text>
</comment>
<comment type="similarity">
    <text evidence="1">Belongs to the class-I aminoacyl-tRNA synthetase family. ValS type 1 subfamily.</text>
</comment>